<organism>
    <name type="scientific">Homo sapiens</name>
    <name type="common">Human</name>
    <dbReference type="NCBI Taxonomy" id="9606"/>
    <lineage>
        <taxon>Eukaryota</taxon>
        <taxon>Metazoa</taxon>
        <taxon>Chordata</taxon>
        <taxon>Craniata</taxon>
        <taxon>Vertebrata</taxon>
        <taxon>Euteleostomi</taxon>
        <taxon>Mammalia</taxon>
        <taxon>Eutheria</taxon>
        <taxon>Euarchontoglires</taxon>
        <taxon>Primates</taxon>
        <taxon>Haplorrhini</taxon>
        <taxon>Catarrhini</taxon>
        <taxon>Hominidae</taxon>
        <taxon>Homo</taxon>
    </lineage>
</organism>
<dbReference type="EMBL" id="DQ000004">
    <property type="protein sequence ID" value="AAY18811.1"/>
    <property type="molecule type" value="mRNA"/>
</dbReference>
<dbReference type="EMBL" id="AY358691">
    <property type="protein sequence ID" value="AAQ89054.1"/>
    <property type="molecule type" value="mRNA"/>
</dbReference>
<dbReference type="EMBL" id="AK075394">
    <property type="protein sequence ID" value="BAC11592.1"/>
    <property type="molecule type" value="mRNA"/>
</dbReference>
<dbReference type="EMBL" id="AL136636">
    <property type="protein sequence ID" value="CAB66571.1"/>
    <property type="molecule type" value="mRNA"/>
</dbReference>
<dbReference type="EMBL" id="AK223131">
    <property type="protein sequence ID" value="BAD96851.1"/>
    <property type="molecule type" value="mRNA"/>
</dbReference>
<dbReference type="EMBL" id="AK314309">
    <property type="protein sequence ID" value="BAG36961.1"/>
    <property type="molecule type" value="mRNA"/>
</dbReference>
<dbReference type="EMBL" id="AL138743">
    <property type="status" value="NOT_ANNOTATED_CDS"/>
    <property type="molecule type" value="Genomic_DNA"/>
</dbReference>
<dbReference type="EMBL" id="AL356235">
    <property type="status" value="NOT_ANNOTATED_CDS"/>
    <property type="molecule type" value="Genomic_DNA"/>
</dbReference>
<dbReference type="EMBL" id="CH471104">
    <property type="protein sequence ID" value="EAW98608.1"/>
    <property type="molecule type" value="Genomic_DNA"/>
</dbReference>
<dbReference type="EMBL" id="CH471104">
    <property type="protein sequence ID" value="EAW98609.1"/>
    <property type="molecule type" value="Genomic_DNA"/>
</dbReference>
<dbReference type="EMBL" id="CH471104">
    <property type="protein sequence ID" value="EAW98610.1"/>
    <property type="molecule type" value="Genomic_DNA"/>
</dbReference>
<dbReference type="EMBL" id="BC041014">
    <property type="protein sequence ID" value="AAH41014.1"/>
    <property type="molecule type" value="mRNA"/>
</dbReference>
<dbReference type="EMBL" id="BC060842">
    <property type="protein sequence ID" value="AAH60842.1"/>
    <property type="molecule type" value="mRNA"/>
</dbReference>
<dbReference type="EMBL" id="BC063037">
    <property type="protein sequence ID" value="AAH63037.1"/>
    <property type="molecule type" value="mRNA"/>
</dbReference>
<dbReference type="CCDS" id="CCDS94636.1">
    <molecule id="Q9H0U3-1"/>
</dbReference>
<dbReference type="RefSeq" id="NP_001354845.1">
    <molecule id="Q9H0U3-1"/>
    <property type="nucleotide sequence ID" value="NM_001367916.1"/>
</dbReference>
<dbReference type="RefSeq" id="NP_115497.4">
    <property type="nucleotide sequence ID" value="NM_032121.5"/>
</dbReference>
<dbReference type="PDB" id="6S7T">
    <property type="method" value="EM"/>
    <property type="resolution" value="3.50 A"/>
    <property type="chains" value="H=1-335"/>
</dbReference>
<dbReference type="PDBsum" id="6S7T"/>
<dbReference type="EMDB" id="EMD-10112"/>
<dbReference type="SMR" id="Q9H0U3"/>
<dbReference type="BioGRID" id="123856">
    <property type="interactions" value="300"/>
</dbReference>
<dbReference type="ComplexPortal" id="CPX-5622">
    <property type="entry name" value="Oligosaccharyltransferase complex B, MAGT1 variant"/>
</dbReference>
<dbReference type="CORUM" id="Q9H0U3"/>
<dbReference type="FunCoup" id="Q9H0U3">
    <property type="interactions" value="1268"/>
</dbReference>
<dbReference type="IntAct" id="Q9H0U3">
    <property type="interactions" value="101"/>
</dbReference>
<dbReference type="MINT" id="Q9H0U3"/>
<dbReference type="STRING" id="9606.ENSP00000354649"/>
<dbReference type="TCDB" id="1.A.76.1.1">
    <property type="family name" value="the magnesium transporter1 (magt1) family"/>
</dbReference>
<dbReference type="TCDB" id="9.B.142.3.17">
    <property type="family name" value="the integral membrane glycosyltransferase family 39 (gt39) family"/>
</dbReference>
<dbReference type="GlyCosmos" id="Q9H0U3">
    <property type="glycosylation" value="1 site, No reported glycans"/>
</dbReference>
<dbReference type="GlyGen" id="Q9H0U3">
    <property type="glycosylation" value="2 sites, 1 N-linked glycan (1 site), 1 O-linked glycan (1 site)"/>
</dbReference>
<dbReference type="iPTMnet" id="Q9H0U3"/>
<dbReference type="PhosphoSitePlus" id="Q9H0U3"/>
<dbReference type="SwissPalm" id="Q9H0U3"/>
<dbReference type="BioMuta" id="MAGT1"/>
<dbReference type="DMDM" id="74761391"/>
<dbReference type="jPOST" id="Q9H0U3"/>
<dbReference type="MassIVE" id="Q9H0U3"/>
<dbReference type="PaxDb" id="9606-ENSP00000354649"/>
<dbReference type="PeptideAtlas" id="Q9H0U3"/>
<dbReference type="ProteomicsDB" id="66990"/>
<dbReference type="ProteomicsDB" id="80324">
    <molecule id="Q9H0U3-1"/>
</dbReference>
<dbReference type="Pumba" id="Q9H0U3"/>
<dbReference type="Antibodypedia" id="43998">
    <property type="antibodies" value="120 antibodies from 22 providers"/>
</dbReference>
<dbReference type="DNASU" id="84061"/>
<dbReference type="Ensembl" id="ENST00000358075.11">
    <molecule id="Q9H0U3-1"/>
    <property type="protein sequence ID" value="ENSP00000354649.6"/>
    <property type="gene ID" value="ENSG00000102158.22"/>
</dbReference>
<dbReference type="Ensembl" id="ENST00000373336.3">
    <molecule id="Q9H0U3-2"/>
    <property type="protein sequence ID" value="ENSP00000362433.3"/>
    <property type="gene ID" value="ENSG00000102158.22"/>
</dbReference>
<dbReference type="Ensembl" id="ENST00000618282.5">
    <molecule id="Q9H0U3-1"/>
    <property type="protein sequence ID" value="ENSP00000480732.1"/>
    <property type="gene ID" value="ENSG00000102158.22"/>
</dbReference>
<dbReference type="GeneID" id="84061"/>
<dbReference type="KEGG" id="hsa:84061"/>
<dbReference type="MANE-Select" id="ENST00000618282.5">
    <property type="protein sequence ID" value="ENSP00000480732.1"/>
    <property type="RefSeq nucleotide sequence ID" value="NM_001367916.1"/>
    <property type="RefSeq protein sequence ID" value="NP_001354845.1"/>
</dbReference>
<dbReference type="UCSC" id="uc065abq.1">
    <molecule id="Q9H0U3-1"/>
    <property type="organism name" value="human"/>
</dbReference>
<dbReference type="AGR" id="HGNC:28880"/>
<dbReference type="CTD" id="84061"/>
<dbReference type="DisGeNET" id="84061"/>
<dbReference type="GeneCards" id="MAGT1"/>
<dbReference type="GeneReviews" id="MAGT1"/>
<dbReference type="HGNC" id="HGNC:28880">
    <property type="gene designation" value="MAGT1"/>
</dbReference>
<dbReference type="HPA" id="ENSG00000102158">
    <property type="expression patterns" value="Low tissue specificity"/>
</dbReference>
<dbReference type="MalaCards" id="MAGT1"/>
<dbReference type="MIM" id="300715">
    <property type="type" value="gene"/>
</dbReference>
<dbReference type="MIM" id="300853">
    <property type="type" value="phenotype"/>
</dbReference>
<dbReference type="MIM" id="301031">
    <property type="type" value="phenotype"/>
</dbReference>
<dbReference type="neXtProt" id="NX_Q9H0U3"/>
<dbReference type="OpenTargets" id="ENSG00000102158"/>
<dbReference type="Orphanet" id="317476">
    <property type="disease" value="XMEN"/>
</dbReference>
<dbReference type="PharmGKB" id="PA162394900"/>
<dbReference type="VEuPathDB" id="HostDB:ENSG00000102158"/>
<dbReference type="eggNOG" id="KOG2603">
    <property type="taxonomic scope" value="Eukaryota"/>
</dbReference>
<dbReference type="GeneTree" id="ENSGT00390000012030"/>
<dbReference type="HOGENOM" id="CLU_052855_0_0_1"/>
<dbReference type="InParanoid" id="Q9H0U3"/>
<dbReference type="OrthoDB" id="67566at2759"/>
<dbReference type="PAN-GO" id="Q9H0U3">
    <property type="GO annotations" value="2 GO annotations based on evolutionary models"/>
</dbReference>
<dbReference type="PhylomeDB" id="Q9H0U3"/>
<dbReference type="TreeFam" id="TF314850"/>
<dbReference type="PathwayCommons" id="Q9H0U3"/>
<dbReference type="Reactome" id="R-HSA-446203">
    <property type="pathway name" value="Asparagine N-linked glycosylation"/>
</dbReference>
<dbReference type="Reactome" id="R-HSA-5223345">
    <property type="pathway name" value="Miscellaneous transport and binding events"/>
</dbReference>
<dbReference type="Reactome" id="R-HSA-6798695">
    <property type="pathway name" value="Neutrophil degranulation"/>
</dbReference>
<dbReference type="Reactome" id="R-HSA-9694548">
    <property type="pathway name" value="Maturation of spike protein"/>
</dbReference>
<dbReference type="SignaLink" id="Q9H0U3"/>
<dbReference type="SIGNOR" id="Q9H0U3"/>
<dbReference type="UniPathway" id="UPA00378"/>
<dbReference type="BioGRID-ORCS" id="84061">
    <property type="hits" value="22 hits in 776 CRISPR screens"/>
</dbReference>
<dbReference type="ChiTaRS" id="MAGT1">
    <property type="organism name" value="human"/>
</dbReference>
<dbReference type="GeneWiki" id="RP11-217H1.1"/>
<dbReference type="GenomeRNAi" id="84061"/>
<dbReference type="Pharos" id="Q9H0U3">
    <property type="development level" value="Tbio"/>
</dbReference>
<dbReference type="PRO" id="PR:Q9H0U3"/>
<dbReference type="Proteomes" id="UP000005640">
    <property type="component" value="Chromosome X"/>
</dbReference>
<dbReference type="RNAct" id="Q9H0U3">
    <property type="molecule type" value="protein"/>
</dbReference>
<dbReference type="Bgee" id="ENSG00000102158">
    <property type="expression patterns" value="Expressed in palpebral conjunctiva and 207 other cell types or tissues"/>
</dbReference>
<dbReference type="ExpressionAtlas" id="Q9H0U3">
    <property type="expression patterns" value="baseline and differential"/>
</dbReference>
<dbReference type="GO" id="GO:0035577">
    <property type="term" value="C:azurophil granule membrane"/>
    <property type="evidence" value="ECO:0000304"/>
    <property type="project" value="Reactome"/>
</dbReference>
<dbReference type="GO" id="GO:0005783">
    <property type="term" value="C:endoplasmic reticulum"/>
    <property type="evidence" value="ECO:0000314"/>
    <property type="project" value="UniProtKB"/>
</dbReference>
<dbReference type="GO" id="GO:0005789">
    <property type="term" value="C:endoplasmic reticulum membrane"/>
    <property type="evidence" value="ECO:0000303"/>
    <property type="project" value="ComplexPortal"/>
</dbReference>
<dbReference type="GO" id="GO:0016020">
    <property type="term" value="C:membrane"/>
    <property type="evidence" value="ECO:0007005"/>
    <property type="project" value="UniProtKB"/>
</dbReference>
<dbReference type="GO" id="GO:0008250">
    <property type="term" value="C:oligosaccharyltransferase complex"/>
    <property type="evidence" value="ECO:0000314"/>
    <property type="project" value="UniProtKB"/>
</dbReference>
<dbReference type="GO" id="GO:0160227">
    <property type="term" value="C:oligosaccharyltransferase complex B"/>
    <property type="evidence" value="ECO:0000314"/>
    <property type="project" value="UniProtKB"/>
</dbReference>
<dbReference type="GO" id="GO:0005886">
    <property type="term" value="C:plasma membrane"/>
    <property type="evidence" value="ECO:0000304"/>
    <property type="project" value="Reactome"/>
</dbReference>
<dbReference type="GO" id="GO:0015095">
    <property type="term" value="F:magnesium ion transmembrane transporter activity"/>
    <property type="evidence" value="ECO:0000304"/>
    <property type="project" value="Reactome"/>
</dbReference>
<dbReference type="GO" id="GO:0050890">
    <property type="term" value="P:cognition"/>
    <property type="evidence" value="ECO:0000315"/>
    <property type="project" value="UniProtKB"/>
</dbReference>
<dbReference type="GO" id="GO:0015693">
    <property type="term" value="P:magnesium ion transport"/>
    <property type="evidence" value="ECO:0000315"/>
    <property type="project" value="UniProtKB"/>
</dbReference>
<dbReference type="GO" id="GO:0006487">
    <property type="term" value="P:protein N-linked glycosylation"/>
    <property type="evidence" value="ECO:0000315"/>
    <property type="project" value="UniProtKB"/>
</dbReference>
<dbReference type="GO" id="GO:0018279">
    <property type="term" value="P:protein N-linked glycosylation via asparagine"/>
    <property type="evidence" value="ECO:0000315"/>
    <property type="project" value="UniProtKB"/>
</dbReference>
<dbReference type="GO" id="GO:0055085">
    <property type="term" value="P:transmembrane transport"/>
    <property type="evidence" value="ECO:0000304"/>
    <property type="project" value="Reactome"/>
</dbReference>
<dbReference type="CDD" id="cd02947">
    <property type="entry name" value="TRX_family"/>
    <property type="match status" value="1"/>
</dbReference>
<dbReference type="FunFam" id="3.40.30.10:FF:000009">
    <property type="entry name" value="Tumor suppressor candidate 3"/>
    <property type="match status" value="1"/>
</dbReference>
<dbReference type="Gene3D" id="3.40.30.10">
    <property type="entry name" value="Glutaredoxin"/>
    <property type="match status" value="1"/>
</dbReference>
<dbReference type="InterPro" id="IPR021149">
    <property type="entry name" value="OligosaccharylTrfase_OST3/OST6"/>
</dbReference>
<dbReference type="InterPro" id="IPR036249">
    <property type="entry name" value="Thioredoxin-like_sf"/>
</dbReference>
<dbReference type="PANTHER" id="PTHR12692">
    <property type="entry name" value="DOLICHYL-DIPHOSPHOOLIGOSACCHARIDE--PROTEIN GLYCOSYLTRANSFERASE-RELATED"/>
    <property type="match status" value="1"/>
</dbReference>
<dbReference type="PANTHER" id="PTHR12692:SF2">
    <property type="entry name" value="MAGNESIUM TRANSPORTER PROTEIN 1"/>
    <property type="match status" value="1"/>
</dbReference>
<dbReference type="Pfam" id="PF04756">
    <property type="entry name" value="OST3_OST6"/>
    <property type="match status" value="1"/>
</dbReference>
<dbReference type="SUPFAM" id="SSF52833">
    <property type="entry name" value="Thioredoxin-like"/>
    <property type="match status" value="1"/>
</dbReference>
<protein>
    <recommendedName>
        <fullName>Dolichyl-diphosphooligosaccharide--protein glycosyltransferase subunit MAGT1</fullName>
        <shortName>Oligosaccharyl transferase subunit MAGT1</shortName>
    </recommendedName>
    <alternativeName>
        <fullName>Implantation-associated protein</fullName>
        <shortName>IAP</shortName>
    </alternativeName>
    <alternativeName>
        <fullName evidence="15">Magnesium transporter protein 1</fullName>
        <shortName>MagT1</shortName>
    </alternativeName>
</protein>
<sequence length="335" mass="38037">MAARWRFWCVSVTMVVALLIVCDVPSASAQRKKEMVLSEKVSQLMEWTNKRPVIRMNGDKFRRLVKAPPRNYSVIVMFTALQLHRQCVVCKQADEEFQILANSWRYSSAFTNRIFFAMVDFDEGSDVFQMLNMNSAPTFINFPAKGKPKRGDTYELQVRGFSAEQIARWIADRTDVNIRVIRPPNYAGPLMLGLLLAVIGGLVYLRRSNMEFLFNKTGWAFAALCFVLAMTSGQMWNHIRGPPYAHKNPHTGHVNYIHGSSQAQFVAETHIVLLFNGGVTLGMVLLCEAATSDMDIGKRKIMCVAGIGLVVLFFSWMLSIFRSKYHGYPYSFLMS</sequence>
<evidence type="ECO:0000250" key="1"/>
<evidence type="ECO:0000255" key="2"/>
<evidence type="ECO:0000269" key="3">
    <source>
    </source>
</evidence>
<evidence type="ECO:0000269" key="4">
    <source>
    </source>
</evidence>
<evidence type="ECO:0000269" key="5">
    <source>
    </source>
</evidence>
<evidence type="ECO:0000269" key="6">
    <source>
    </source>
</evidence>
<evidence type="ECO:0000269" key="7">
    <source>
    </source>
</evidence>
<evidence type="ECO:0000269" key="8">
    <source>
    </source>
</evidence>
<evidence type="ECO:0000269" key="9">
    <source>
    </source>
</evidence>
<evidence type="ECO:0000269" key="10">
    <source>
    </source>
</evidence>
<evidence type="ECO:0000269" key="11">
    <source>
    </source>
</evidence>
<evidence type="ECO:0000269" key="12">
    <source>
    </source>
</evidence>
<evidence type="ECO:0000269" key="13">
    <source>
    </source>
</evidence>
<evidence type="ECO:0000303" key="14">
    <source>
    </source>
</evidence>
<evidence type="ECO:0000305" key="15"/>
<evidence type="ECO:0000305" key="16">
    <source>
    </source>
</evidence>
<evidence type="ECO:0000305" key="17">
    <source>
    </source>
</evidence>
<evidence type="ECO:0000305" key="18">
    <source>
    </source>
</evidence>
<evidence type="ECO:0000305" key="19">
    <source>
    </source>
</evidence>
<evidence type="ECO:0000312" key="20">
    <source>
        <dbReference type="HGNC" id="HGNC:28880"/>
    </source>
</evidence>
<evidence type="ECO:0007744" key="21">
    <source>
        <dbReference type="PDB" id="6S7T"/>
    </source>
</evidence>
<evidence type="ECO:0007829" key="22">
    <source>
        <dbReference type="PDB" id="6S7T"/>
    </source>
</evidence>
<gene>
    <name evidence="20" type="primary">MAGT1</name>
    <name type="synonym">IAG2</name>
    <name type="ORF">PSEC0084</name>
    <name type="ORF">UNQ628/PRO1244</name>
</gene>
<accession>Q9H0U3</accession>
<accession>B2RAR4</accession>
<accession>D3DTE3</accession>
<accession>Q53G00</accession>
<accession>Q6P577</accession>
<accession>Q8NBN6</accession>
<proteinExistence type="evidence at protein level"/>
<name>MAGT1_HUMAN</name>
<keyword id="KW-0002">3D-structure</keyword>
<keyword id="KW-0025">Alternative splicing</keyword>
<keyword id="KW-1003">Cell membrane</keyword>
<keyword id="KW-0900">Congenital disorder of glycosylation</keyword>
<keyword id="KW-0225">Disease variant</keyword>
<keyword id="KW-1015">Disulfide bond</keyword>
<keyword id="KW-0256">Endoplasmic reticulum</keyword>
<keyword id="KW-0325">Glycoprotein</keyword>
<keyword id="KW-0460">Magnesium</keyword>
<keyword id="KW-0472">Membrane</keyword>
<keyword id="KW-1267">Proteomics identification</keyword>
<keyword id="KW-1185">Reference proteome</keyword>
<keyword id="KW-0732">Signal</keyword>
<keyword id="KW-0812">Transmembrane</keyword>
<keyword id="KW-1133">Transmembrane helix</keyword>
<keyword id="KW-0813">Transport</keyword>
<comment type="function">
    <text evidence="9 11 12 13 15 16 18">Accessory component of the STT3B-containing form of the N-oligosaccharyl transferase (OST) complex which catalyzes the transfer of a high mannose oligosaccharide from a lipid-linked oligosaccharide donor to an asparagine residue within an Asn-X-Ser/Thr consensus motif in nascent polypeptide chains (PubMed:31831667). Involved in N-glycosylation of STT3B-dependent substrates (PubMed:31831667). Specifically required for the glycosylation of a subset of acceptor sites that are near cysteine residues; in this function seems to act redundantly with TUSC3. In its oxidized form proposed to form transient mixed disulfides with a glycoprotein substrate to facilitate access of STT3B to the unmodified acceptor site. Also has oxidoreductase-independent functions in the STT3B-containing OST complex possibly involving substrate recognition. Could indirectly play a role in Mg(2+) transport in epithelial cells (Probable).</text>
</comment>
<comment type="pathway">
    <text evidence="13">Protein modification; protein glycosylation.</text>
</comment>
<comment type="subunit">
    <text evidence="9 13 15">Accessory component of the STT3B-containing form of the oligosaccharyltransferase (OST) complex (PubMed:31831667). OST exists in two different complex forms which contain common core subunits RPN1, RPN2, OST48, OST4, DAD1 and TMEM258, either STT3A or STT3B as catalytic subunits, and form-specific accessory subunits (PubMed:31831667). OST can form stable complexes with the Sec61 complex or with both the Sec61 and TRAP complexes. The association of TUSC3 or MAGT1 with the STT3B-containing complex seems to be mutually exclusvice.</text>
</comment>
<comment type="subcellular location">
    <subcellularLocation>
        <location evidence="6">Cell membrane</location>
        <topology evidence="6">Multi-pass membrane protein</topology>
    </subcellularLocation>
    <subcellularLocation>
        <location evidence="9">Endoplasmic reticulum</location>
    </subcellularLocation>
    <subcellularLocation>
        <location evidence="1">Endoplasmic reticulum membrane</location>
        <topology evidence="1">Multi-pass membrane protein</topology>
    </subcellularLocation>
</comment>
<comment type="alternative products">
    <event type="alternative splicing"/>
    <isoform>
        <id>Q9H0U3-1</id>
        <name>1</name>
        <sequence type="displayed"/>
    </isoform>
    <isoform>
        <id>Q9H0U3-2</id>
        <name>2</name>
        <sequence type="described" ref="VSP_056556 VSP_056557"/>
    </isoform>
</comment>
<comment type="tissue specificity">
    <text evidence="3 4 6 12">Ubiquitous. Expressed at very low levels in brain, lung and kidney.</text>
</comment>
<comment type="induction">
    <text evidence="6">Up-regulated by low extracellular Mg(2+).</text>
</comment>
<comment type="disease" evidence="7 8 10 12">
    <disease id="DI-03201">
        <name>Immunodeficiency, X-linked, with magnesium defect, Epstein-Barr virus infection and neoplasia</name>
        <acronym>XMEN</acronym>
        <description>A disease characterized by CD4 lymphopenia, severe chronic viral infections, and defective T-lymphocyte activation.</description>
        <dbReference type="MIM" id="300853"/>
    </disease>
    <text>The disease is caused by variants affecting the gene represented in this entry.</text>
</comment>
<comment type="disease" evidence="12">
    <disease id="DI-05648">
        <name>Congenital disorder of glycosylation 1CC</name>
        <acronym>CDG1CC</acronym>
        <description>A form of congenital disorder of glycosylation, a multisystem disorder caused by a defect in glycoprotein biosynthesis and characterized by under-glycosylated serum glycoproteins. Congenital disorders of glycosylation result in a wide variety of clinical features, such as defects in the nervous system development, psychomotor retardation, dysmorphic features, hypotonia, coagulation disorders, and immunodeficiency. The broad spectrum of features reflects the critical role of N-glycoproteins during embryonic development, differentiation, and maintenance of cell functions. CDG1CC is an X-linked recessive form mainly characterized by intellectual and developmental disability.</description>
        <dbReference type="MIM" id="301031"/>
    </disease>
    <text>The disease is caused by variants affecting the gene represented in this entry.</text>
</comment>
<comment type="similarity">
    <text evidence="15">Belongs to the OST3/OST6 family.</text>
</comment>
<comment type="caution">
    <text evidence="17 19">Although MAGT1 has been reported to be involved in intellectual disability (PubMed:18455129), its pathological role is questionable (PubMed:23871722).</text>
</comment>
<reference key="1">
    <citation type="journal article" date="2005" name="BMC Genomics">
        <title>Identification and characterization of a novel mammalian Mg2+ transporter with channel-like properties.</title>
        <authorList>
            <person name="Goytain A."/>
            <person name="Quamme G.A."/>
        </authorList>
    </citation>
    <scope>NUCLEOTIDE SEQUENCE [MRNA] (ISOFORM 1)</scope>
    <scope>FUNCTION</scope>
    <scope>TISSUE SPECIFICITY</scope>
</reference>
<reference key="2">
    <citation type="journal article" date="2003" name="Genome Res.">
        <title>The secreted protein discovery initiative (SPDI), a large-scale effort to identify novel human secreted and transmembrane proteins: a bioinformatics assessment.</title>
        <authorList>
            <person name="Clark H.F."/>
            <person name="Gurney A.L."/>
            <person name="Abaya E."/>
            <person name="Baker K."/>
            <person name="Baldwin D.T."/>
            <person name="Brush J."/>
            <person name="Chen J."/>
            <person name="Chow B."/>
            <person name="Chui C."/>
            <person name="Crowley C."/>
            <person name="Currell B."/>
            <person name="Deuel B."/>
            <person name="Dowd P."/>
            <person name="Eaton D."/>
            <person name="Foster J.S."/>
            <person name="Grimaldi C."/>
            <person name="Gu Q."/>
            <person name="Hass P.E."/>
            <person name="Heldens S."/>
            <person name="Huang A."/>
            <person name="Kim H.S."/>
            <person name="Klimowski L."/>
            <person name="Jin Y."/>
            <person name="Johnson S."/>
            <person name="Lee J."/>
            <person name="Lewis L."/>
            <person name="Liao D."/>
            <person name="Mark M.R."/>
            <person name="Robbie E."/>
            <person name="Sanchez C."/>
            <person name="Schoenfeld J."/>
            <person name="Seshagiri S."/>
            <person name="Simmons L."/>
            <person name="Singh J."/>
            <person name="Smith V."/>
            <person name="Stinson J."/>
            <person name="Vagts A."/>
            <person name="Vandlen R.L."/>
            <person name="Watanabe C."/>
            <person name="Wieand D."/>
            <person name="Woods K."/>
            <person name="Xie M.-H."/>
            <person name="Yansura D.G."/>
            <person name="Yi S."/>
            <person name="Yu G."/>
            <person name="Yuan J."/>
            <person name="Zhang M."/>
            <person name="Zhang Z."/>
            <person name="Goddard A.D."/>
            <person name="Wood W.I."/>
            <person name="Godowski P.J."/>
            <person name="Gray A.M."/>
        </authorList>
    </citation>
    <scope>NUCLEOTIDE SEQUENCE [LARGE SCALE MRNA] (ISOFORM 1)</scope>
</reference>
<reference key="3">
    <citation type="journal article" date="2004" name="Nat. Genet.">
        <title>Complete sequencing and characterization of 21,243 full-length human cDNAs.</title>
        <authorList>
            <person name="Ota T."/>
            <person name="Suzuki Y."/>
            <person name="Nishikawa T."/>
            <person name="Otsuki T."/>
            <person name="Sugiyama T."/>
            <person name="Irie R."/>
            <person name="Wakamatsu A."/>
            <person name="Hayashi K."/>
            <person name="Sato H."/>
            <person name="Nagai K."/>
            <person name="Kimura K."/>
            <person name="Makita H."/>
            <person name="Sekine M."/>
            <person name="Obayashi M."/>
            <person name="Nishi T."/>
            <person name="Shibahara T."/>
            <person name="Tanaka T."/>
            <person name="Ishii S."/>
            <person name="Yamamoto J."/>
            <person name="Saito K."/>
            <person name="Kawai Y."/>
            <person name="Isono Y."/>
            <person name="Nakamura Y."/>
            <person name="Nagahari K."/>
            <person name="Murakami K."/>
            <person name="Yasuda T."/>
            <person name="Iwayanagi T."/>
            <person name="Wagatsuma M."/>
            <person name="Shiratori A."/>
            <person name="Sudo H."/>
            <person name="Hosoiri T."/>
            <person name="Kaku Y."/>
            <person name="Kodaira H."/>
            <person name="Kondo H."/>
            <person name="Sugawara M."/>
            <person name="Takahashi M."/>
            <person name="Kanda K."/>
            <person name="Yokoi T."/>
            <person name="Furuya T."/>
            <person name="Kikkawa E."/>
            <person name="Omura Y."/>
            <person name="Abe K."/>
            <person name="Kamihara K."/>
            <person name="Katsuta N."/>
            <person name="Sato K."/>
            <person name="Tanikawa M."/>
            <person name="Yamazaki M."/>
            <person name="Ninomiya K."/>
            <person name="Ishibashi T."/>
            <person name="Yamashita H."/>
            <person name="Murakawa K."/>
            <person name="Fujimori K."/>
            <person name="Tanai H."/>
            <person name="Kimata M."/>
            <person name="Watanabe M."/>
            <person name="Hiraoka S."/>
            <person name="Chiba Y."/>
            <person name="Ishida S."/>
            <person name="Ono Y."/>
            <person name="Takiguchi S."/>
            <person name="Watanabe S."/>
            <person name="Yosida M."/>
            <person name="Hotuta T."/>
            <person name="Kusano J."/>
            <person name="Kanehori K."/>
            <person name="Takahashi-Fujii A."/>
            <person name="Hara H."/>
            <person name="Tanase T.-O."/>
            <person name="Nomura Y."/>
            <person name="Togiya S."/>
            <person name="Komai F."/>
            <person name="Hara R."/>
            <person name="Takeuchi K."/>
            <person name="Arita M."/>
            <person name="Imose N."/>
            <person name="Musashino K."/>
            <person name="Yuuki H."/>
            <person name="Oshima A."/>
            <person name="Sasaki N."/>
            <person name="Aotsuka S."/>
            <person name="Yoshikawa Y."/>
            <person name="Matsunawa H."/>
            <person name="Ichihara T."/>
            <person name="Shiohata N."/>
            <person name="Sano S."/>
            <person name="Moriya S."/>
            <person name="Momiyama H."/>
            <person name="Satoh N."/>
            <person name="Takami S."/>
            <person name="Terashima Y."/>
            <person name="Suzuki O."/>
            <person name="Nakagawa S."/>
            <person name="Senoh A."/>
            <person name="Mizoguchi H."/>
            <person name="Goto Y."/>
            <person name="Shimizu F."/>
            <person name="Wakebe H."/>
            <person name="Hishigaki H."/>
            <person name="Watanabe T."/>
            <person name="Sugiyama A."/>
            <person name="Takemoto M."/>
            <person name="Kawakami B."/>
            <person name="Yamazaki M."/>
            <person name="Watanabe K."/>
            <person name="Kumagai A."/>
            <person name="Itakura S."/>
            <person name="Fukuzumi Y."/>
            <person name="Fujimori Y."/>
            <person name="Komiyama M."/>
            <person name="Tashiro H."/>
            <person name="Tanigami A."/>
            <person name="Fujiwara T."/>
            <person name="Ono T."/>
            <person name="Yamada K."/>
            <person name="Fujii Y."/>
            <person name="Ozaki K."/>
            <person name="Hirao M."/>
            <person name="Ohmori Y."/>
            <person name="Kawabata A."/>
            <person name="Hikiji T."/>
            <person name="Kobatake N."/>
            <person name="Inagaki H."/>
            <person name="Ikema Y."/>
            <person name="Okamoto S."/>
            <person name="Okitani R."/>
            <person name="Kawakami T."/>
            <person name="Noguchi S."/>
            <person name="Itoh T."/>
            <person name="Shigeta K."/>
            <person name="Senba T."/>
            <person name="Matsumura K."/>
            <person name="Nakajima Y."/>
            <person name="Mizuno T."/>
            <person name="Morinaga M."/>
            <person name="Sasaki M."/>
            <person name="Togashi T."/>
            <person name="Oyama M."/>
            <person name="Hata H."/>
            <person name="Watanabe M."/>
            <person name="Komatsu T."/>
            <person name="Mizushima-Sugano J."/>
            <person name="Satoh T."/>
            <person name="Shirai Y."/>
            <person name="Takahashi Y."/>
            <person name="Nakagawa K."/>
            <person name="Okumura K."/>
            <person name="Nagase T."/>
            <person name="Nomura N."/>
            <person name="Kikuchi H."/>
            <person name="Masuho Y."/>
            <person name="Yamashita R."/>
            <person name="Nakai K."/>
            <person name="Yada T."/>
            <person name="Nakamura Y."/>
            <person name="Ohara O."/>
            <person name="Isogai T."/>
            <person name="Sugano S."/>
        </authorList>
    </citation>
    <scope>NUCLEOTIDE SEQUENCE [LARGE SCALE MRNA] (ISOFORM 1)</scope>
    <source>
        <tissue>Placenta</tissue>
    </source>
</reference>
<reference key="4">
    <citation type="journal article" date="2005" name="DNA Res.">
        <title>Signal sequence and keyword trap in silico for selection of full-length human cDNAs encoding secretion or membrane proteins from oligo-capped cDNA libraries.</title>
        <authorList>
            <person name="Otsuki T."/>
            <person name="Ota T."/>
            <person name="Nishikawa T."/>
            <person name="Hayashi K."/>
            <person name="Suzuki Y."/>
            <person name="Yamamoto J."/>
            <person name="Wakamatsu A."/>
            <person name="Kimura K."/>
            <person name="Sakamoto K."/>
            <person name="Hatano N."/>
            <person name="Kawai Y."/>
            <person name="Ishii S."/>
            <person name="Saito K."/>
            <person name="Kojima S."/>
            <person name="Sugiyama T."/>
            <person name="Ono T."/>
            <person name="Okano K."/>
            <person name="Yoshikawa Y."/>
            <person name="Aotsuka S."/>
            <person name="Sasaki N."/>
            <person name="Hattori A."/>
            <person name="Okumura K."/>
            <person name="Nagai K."/>
            <person name="Sugano S."/>
            <person name="Isogai T."/>
        </authorList>
    </citation>
    <scope>NUCLEOTIDE SEQUENCE [LARGE SCALE MRNA] (ISOFORM 1)</scope>
    <source>
        <tissue>Embryo</tissue>
    </source>
</reference>
<reference key="5">
    <citation type="journal article" date="2001" name="Genome Res.">
        <title>Towards a catalog of human genes and proteins: sequencing and analysis of 500 novel complete protein coding human cDNAs.</title>
        <authorList>
            <person name="Wiemann S."/>
            <person name="Weil B."/>
            <person name="Wellenreuther R."/>
            <person name="Gassenhuber J."/>
            <person name="Glassl S."/>
            <person name="Ansorge W."/>
            <person name="Boecher M."/>
            <person name="Bloecker H."/>
            <person name="Bauersachs S."/>
            <person name="Blum H."/>
            <person name="Lauber J."/>
            <person name="Duesterhoeft A."/>
            <person name="Beyer A."/>
            <person name="Koehrer K."/>
            <person name="Strack N."/>
            <person name="Mewes H.-W."/>
            <person name="Ottenwaelder B."/>
            <person name="Obermaier B."/>
            <person name="Tampe J."/>
            <person name="Heubner D."/>
            <person name="Wambutt R."/>
            <person name="Korn B."/>
            <person name="Klein M."/>
            <person name="Poustka A."/>
        </authorList>
    </citation>
    <scope>NUCLEOTIDE SEQUENCE [LARGE SCALE MRNA] (ISOFORM 1)</scope>
    <source>
        <tissue>Brain</tissue>
    </source>
</reference>
<reference key="6">
    <citation type="submission" date="2005-04" db="EMBL/GenBank/DDBJ databases">
        <authorList>
            <person name="Suzuki Y."/>
            <person name="Sugano S."/>
            <person name="Totoki Y."/>
            <person name="Toyoda A."/>
            <person name="Takeda T."/>
            <person name="Sakaki Y."/>
            <person name="Tanaka A."/>
            <person name="Yokoyama S."/>
        </authorList>
    </citation>
    <scope>NUCLEOTIDE SEQUENCE [LARGE SCALE MRNA] (ISOFORM 1)</scope>
    <source>
        <tissue>Brain</tissue>
    </source>
</reference>
<reference key="7">
    <citation type="journal article" date="2005" name="Nature">
        <title>The DNA sequence of the human X chromosome.</title>
        <authorList>
            <person name="Ross M.T."/>
            <person name="Grafham D.V."/>
            <person name="Coffey A.J."/>
            <person name="Scherer S."/>
            <person name="McLay K."/>
            <person name="Muzny D."/>
            <person name="Platzer M."/>
            <person name="Howell G.R."/>
            <person name="Burrows C."/>
            <person name="Bird C.P."/>
            <person name="Frankish A."/>
            <person name="Lovell F.L."/>
            <person name="Howe K.L."/>
            <person name="Ashurst J.L."/>
            <person name="Fulton R.S."/>
            <person name="Sudbrak R."/>
            <person name="Wen G."/>
            <person name="Jones M.C."/>
            <person name="Hurles M.E."/>
            <person name="Andrews T.D."/>
            <person name="Scott C.E."/>
            <person name="Searle S."/>
            <person name="Ramser J."/>
            <person name="Whittaker A."/>
            <person name="Deadman R."/>
            <person name="Carter N.P."/>
            <person name="Hunt S.E."/>
            <person name="Chen R."/>
            <person name="Cree A."/>
            <person name="Gunaratne P."/>
            <person name="Havlak P."/>
            <person name="Hodgson A."/>
            <person name="Metzker M.L."/>
            <person name="Richards S."/>
            <person name="Scott G."/>
            <person name="Steffen D."/>
            <person name="Sodergren E."/>
            <person name="Wheeler D.A."/>
            <person name="Worley K.C."/>
            <person name="Ainscough R."/>
            <person name="Ambrose K.D."/>
            <person name="Ansari-Lari M.A."/>
            <person name="Aradhya S."/>
            <person name="Ashwell R.I."/>
            <person name="Babbage A.K."/>
            <person name="Bagguley C.L."/>
            <person name="Ballabio A."/>
            <person name="Banerjee R."/>
            <person name="Barker G.E."/>
            <person name="Barlow K.F."/>
            <person name="Barrett I.P."/>
            <person name="Bates K.N."/>
            <person name="Beare D.M."/>
            <person name="Beasley H."/>
            <person name="Beasley O."/>
            <person name="Beck A."/>
            <person name="Bethel G."/>
            <person name="Blechschmidt K."/>
            <person name="Brady N."/>
            <person name="Bray-Allen S."/>
            <person name="Bridgeman A.M."/>
            <person name="Brown A.J."/>
            <person name="Brown M.J."/>
            <person name="Bonnin D."/>
            <person name="Bruford E.A."/>
            <person name="Buhay C."/>
            <person name="Burch P."/>
            <person name="Burford D."/>
            <person name="Burgess J."/>
            <person name="Burrill W."/>
            <person name="Burton J."/>
            <person name="Bye J.M."/>
            <person name="Carder C."/>
            <person name="Carrel L."/>
            <person name="Chako J."/>
            <person name="Chapman J.C."/>
            <person name="Chavez D."/>
            <person name="Chen E."/>
            <person name="Chen G."/>
            <person name="Chen Y."/>
            <person name="Chen Z."/>
            <person name="Chinault C."/>
            <person name="Ciccodicola A."/>
            <person name="Clark S.Y."/>
            <person name="Clarke G."/>
            <person name="Clee C.M."/>
            <person name="Clegg S."/>
            <person name="Clerc-Blankenburg K."/>
            <person name="Clifford K."/>
            <person name="Cobley V."/>
            <person name="Cole C.G."/>
            <person name="Conquer J.S."/>
            <person name="Corby N."/>
            <person name="Connor R.E."/>
            <person name="David R."/>
            <person name="Davies J."/>
            <person name="Davis C."/>
            <person name="Davis J."/>
            <person name="Delgado O."/>
            <person name="Deshazo D."/>
            <person name="Dhami P."/>
            <person name="Ding Y."/>
            <person name="Dinh H."/>
            <person name="Dodsworth S."/>
            <person name="Draper H."/>
            <person name="Dugan-Rocha S."/>
            <person name="Dunham A."/>
            <person name="Dunn M."/>
            <person name="Durbin K.J."/>
            <person name="Dutta I."/>
            <person name="Eades T."/>
            <person name="Ellwood M."/>
            <person name="Emery-Cohen A."/>
            <person name="Errington H."/>
            <person name="Evans K.L."/>
            <person name="Faulkner L."/>
            <person name="Francis F."/>
            <person name="Frankland J."/>
            <person name="Fraser A.E."/>
            <person name="Galgoczy P."/>
            <person name="Gilbert J."/>
            <person name="Gill R."/>
            <person name="Gloeckner G."/>
            <person name="Gregory S.G."/>
            <person name="Gribble S."/>
            <person name="Griffiths C."/>
            <person name="Grocock R."/>
            <person name="Gu Y."/>
            <person name="Gwilliam R."/>
            <person name="Hamilton C."/>
            <person name="Hart E.A."/>
            <person name="Hawes A."/>
            <person name="Heath P.D."/>
            <person name="Heitmann K."/>
            <person name="Hennig S."/>
            <person name="Hernandez J."/>
            <person name="Hinzmann B."/>
            <person name="Ho S."/>
            <person name="Hoffs M."/>
            <person name="Howden P.J."/>
            <person name="Huckle E.J."/>
            <person name="Hume J."/>
            <person name="Hunt P.J."/>
            <person name="Hunt A.R."/>
            <person name="Isherwood J."/>
            <person name="Jacob L."/>
            <person name="Johnson D."/>
            <person name="Jones S."/>
            <person name="de Jong P.J."/>
            <person name="Joseph S.S."/>
            <person name="Keenan S."/>
            <person name="Kelly S."/>
            <person name="Kershaw J.K."/>
            <person name="Khan Z."/>
            <person name="Kioschis P."/>
            <person name="Klages S."/>
            <person name="Knights A.J."/>
            <person name="Kosiura A."/>
            <person name="Kovar-Smith C."/>
            <person name="Laird G.K."/>
            <person name="Langford C."/>
            <person name="Lawlor S."/>
            <person name="Leversha M."/>
            <person name="Lewis L."/>
            <person name="Liu W."/>
            <person name="Lloyd C."/>
            <person name="Lloyd D.M."/>
            <person name="Loulseged H."/>
            <person name="Loveland J.E."/>
            <person name="Lovell J.D."/>
            <person name="Lozado R."/>
            <person name="Lu J."/>
            <person name="Lyne R."/>
            <person name="Ma J."/>
            <person name="Maheshwari M."/>
            <person name="Matthews L.H."/>
            <person name="McDowall J."/>
            <person name="McLaren S."/>
            <person name="McMurray A."/>
            <person name="Meidl P."/>
            <person name="Meitinger T."/>
            <person name="Milne S."/>
            <person name="Miner G."/>
            <person name="Mistry S.L."/>
            <person name="Morgan M."/>
            <person name="Morris S."/>
            <person name="Mueller I."/>
            <person name="Mullikin J.C."/>
            <person name="Nguyen N."/>
            <person name="Nordsiek G."/>
            <person name="Nyakatura G."/>
            <person name="O'dell C.N."/>
            <person name="Okwuonu G."/>
            <person name="Palmer S."/>
            <person name="Pandian R."/>
            <person name="Parker D."/>
            <person name="Parrish J."/>
            <person name="Pasternak S."/>
            <person name="Patel D."/>
            <person name="Pearce A.V."/>
            <person name="Pearson D.M."/>
            <person name="Pelan S.E."/>
            <person name="Perez L."/>
            <person name="Porter K.M."/>
            <person name="Ramsey Y."/>
            <person name="Reichwald K."/>
            <person name="Rhodes S."/>
            <person name="Ridler K.A."/>
            <person name="Schlessinger D."/>
            <person name="Schueler M.G."/>
            <person name="Sehra H.K."/>
            <person name="Shaw-Smith C."/>
            <person name="Shen H."/>
            <person name="Sheridan E.M."/>
            <person name="Shownkeen R."/>
            <person name="Skuce C.D."/>
            <person name="Smith M.L."/>
            <person name="Sotheran E.C."/>
            <person name="Steingruber H.E."/>
            <person name="Steward C.A."/>
            <person name="Storey R."/>
            <person name="Swann R.M."/>
            <person name="Swarbreck D."/>
            <person name="Tabor P.E."/>
            <person name="Taudien S."/>
            <person name="Taylor T."/>
            <person name="Teague B."/>
            <person name="Thomas K."/>
            <person name="Thorpe A."/>
            <person name="Timms K."/>
            <person name="Tracey A."/>
            <person name="Trevanion S."/>
            <person name="Tromans A.C."/>
            <person name="d'Urso M."/>
            <person name="Verduzco D."/>
            <person name="Villasana D."/>
            <person name="Waldron L."/>
            <person name="Wall M."/>
            <person name="Wang Q."/>
            <person name="Warren J."/>
            <person name="Warry G.L."/>
            <person name="Wei X."/>
            <person name="West A."/>
            <person name="Whitehead S.L."/>
            <person name="Whiteley M.N."/>
            <person name="Wilkinson J.E."/>
            <person name="Willey D.L."/>
            <person name="Williams G."/>
            <person name="Williams L."/>
            <person name="Williamson A."/>
            <person name="Williamson H."/>
            <person name="Wilming L."/>
            <person name="Woodmansey R.L."/>
            <person name="Wray P.W."/>
            <person name="Yen J."/>
            <person name="Zhang J."/>
            <person name="Zhou J."/>
            <person name="Zoghbi H."/>
            <person name="Zorilla S."/>
            <person name="Buck D."/>
            <person name="Reinhardt R."/>
            <person name="Poustka A."/>
            <person name="Rosenthal A."/>
            <person name="Lehrach H."/>
            <person name="Meindl A."/>
            <person name="Minx P.J."/>
            <person name="Hillier L.W."/>
            <person name="Willard H.F."/>
            <person name="Wilson R.K."/>
            <person name="Waterston R.H."/>
            <person name="Rice C.M."/>
            <person name="Vaudin M."/>
            <person name="Coulson A."/>
            <person name="Nelson D.L."/>
            <person name="Weinstock G."/>
            <person name="Sulston J.E."/>
            <person name="Durbin R.M."/>
            <person name="Hubbard T."/>
            <person name="Gibbs R.A."/>
            <person name="Beck S."/>
            <person name="Rogers J."/>
            <person name="Bentley D.R."/>
        </authorList>
    </citation>
    <scope>NUCLEOTIDE SEQUENCE [LARGE SCALE GENOMIC DNA]</scope>
</reference>
<reference key="8">
    <citation type="submission" date="2005-09" db="EMBL/GenBank/DDBJ databases">
        <authorList>
            <person name="Mural R.J."/>
            <person name="Istrail S."/>
            <person name="Sutton G.G."/>
            <person name="Florea L."/>
            <person name="Halpern A.L."/>
            <person name="Mobarry C.M."/>
            <person name="Lippert R."/>
            <person name="Walenz B."/>
            <person name="Shatkay H."/>
            <person name="Dew I."/>
            <person name="Miller J.R."/>
            <person name="Flanigan M.J."/>
            <person name="Edwards N.J."/>
            <person name="Bolanos R."/>
            <person name="Fasulo D."/>
            <person name="Halldorsson B.V."/>
            <person name="Hannenhalli S."/>
            <person name="Turner R."/>
            <person name="Yooseph S."/>
            <person name="Lu F."/>
            <person name="Nusskern D.R."/>
            <person name="Shue B.C."/>
            <person name="Zheng X.H."/>
            <person name="Zhong F."/>
            <person name="Delcher A.L."/>
            <person name="Huson D.H."/>
            <person name="Kravitz S.A."/>
            <person name="Mouchard L."/>
            <person name="Reinert K."/>
            <person name="Remington K.A."/>
            <person name="Clark A.G."/>
            <person name="Waterman M.S."/>
            <person name="Eichler E.E."/>
            <person name="Adams M.D."/>
            <person name="Hunkapiller M.W."/>
            <person name="Myers E.W."/>
            <person name="Venter J.C."/>
        </authorList>
    </citation>
    <scope>NUCLEOTIDE SEQUENCE [LARGE SCALE GENOMIC DNA]</scope>
</reference>
<reference key="9">
    <citation type="journal article" date="2004" name="Genome Res.">
        <title>The status, quality, and expansion of the NIH full-length cDNA project: the Mammalian Gene Collection (MGC).</title>
        <authorList>
            <consortium name="The MGC Project Team"/>
        </authorList>
    </citation>
    <scope>NUCLEOTIDE SEQUENCE [LARGE SCALE MRNA] (ISOFORMS 1 AND 2)</scope>
    <source>
        <tissue>Adrenal cortex</tissue>
        <tissue>Ovary</tissue>
        <tissue>Placenta</tissue>
    </source>
</reference>
<reference key="10">
    <citation type="journal article" date="2003" name="Mol. Cell">
        <title>Oligosaccharyltransferase isoforms that contain different catalytic STT3 subunits have distinct enzymatic properties.</title>
        <authorList>
            <person name="Kelleher D.J."/>
            <person name="Karaoglu D."/>
            <person name="Mandon E.C."/>
            <person name="Gilmore R."/>
        </authorList>
    </citation>
    <scope>IDENTIFICATION IN THE OLIGOSACCHARYLTRANSFERASE (OST) COMPLEX</scope>
    <scope>TISSUE SPECIFICITY</scope>
</reference>
<reference key="11">
    <citation type="journal article" date="2009" name="Proc. Natl. Acad. Sci. U.S.A.">
        <title>Mammalian MagT1 and TUSC3 are required for cellular magnesium uptake and vertebrate embryonic development.</title>
        <authorList>
            <person name="Zhou H."/>
            <person name="Clapham D.E."/>
        </authorList>
    </citation>
    <scope>FUNCTION</scope>
    <scope>SUBCELLULAR LOCATION</scope>
    <scope>TISSUE SPECIFICITY</scope>
    <scope>INDUCTION</scope>
    <scope>TOPOLOGY</scope>
</reference>
<reference key="12">
    <citation type="journal article" date="2011" name="BMC Syst. Biol.">
        <title>Initial characterization of the human central proteome.</title>
        <authorList>
            <person name="Burkard T.R."/>
            <person name="Planyavsky M."/>
            <person name="Kaupe I."/>
            <person name="Breitwieser F.P."/>
            <person name="Buerckstuemmer T."/>
            <person name="Bennett K.L."/>
            <person name="Superti-Furga G."/>
            <person name="Colinge J."/>
        </authorList>
    </citation>
    <scope>IDENTIFICATION BY MASS SPECTROMETRY [LARGE SCALE ANALYSIS]</scope>
</reference>
<reference key="13">
    <citation type="journal article" date="2014" name="J. Cell Biol.">
        <title>Oxidoreductase activity is necessary for N-glycosylation of cysteine-proximal acceptor sites in glycoproteins.</title>
        <authorList>
            <person name="Cherepanova N.A."/>
            <person name="Shrimal S."/>
            <person name="Gilmore R."/>
        </authorList>
    </citation>
    <scope>FUNCTION</scope>
    <scope>IDENTIFICATION IN THE OLIGOSACCHARYLTRANSFERASE COMPLEX</scope>
    <scope>SUBCELLULAR LOCATION</scope>
    <scope>MUTAGENESIS OF CYS-87 AND CYS-90</scope>
</reference>
<reference key="14">
    <citation type="journal article" date="2015" name="Proteomics">
        <title>N-terminome analysis of the human mitochondrial proteome.</title>
        <authorList>
            <person name="Vaca Jacome A.S."/>
            <person name="Rabilloud T."/>
            <person name="Schaeffer-Reiss C."/>
            <person name="Rompais M."/>
            <person name="Ayoub D."/>
            <person name="Lane L."/>
            <person name="Bairoch A."/>
            <person name="Van Dorsselaer A."/>
            <person name="Carapito C."/>
        </authorList>
    </citation>
    <scope>IDENTIFICATION BY MASS SPECTROMETRY [LARGE SCALE ANALYSIS]</scope>
</reference>
<reference key="15">
    <citation type="journal article" date="2016" name="Sci. Rep.">
        <title>Mammalian cells lacking either the cotranslational or posttranslocational oligosaccharyltransferase complex display substrate-dependent defects in asparagine linked glycosylation.</title>
        <authorList>
            <person name="Cherepanova N.A."/>
            <person name="Gilmore R."/>
        </authorList>
    </citation>
    <scope>FUNCTION</scope>
</reference>
<reference evidence="21" key="16">
    <citation type="journal article" date="2019" name="Science">
        <title>Cryo-electron microscopy structures of human oligosaccharyltransferase complexes OST-A and OST-B.</title>
        <authorList>
            <person name="Ramirez A.S."/>
            <person name="Kowal J."/>
            <person name="Locher K.P."/>
        </authorList>
    </citation>
    <scope>STRUCTURE BY ELECTRON MICROSCOPY (3.50 ANGSTROMS)</scope>
    <scope>IDENTIFICATION AS COMPONENT OF THE STT3B-CONTAINING OLIGOSACCHARYLTRANSFERASE (OST) COMPLEX</scope>
    <scope>FUNCTION</scope>
    <scope>PATHWAY</scope>
</reference>
<reference key="17">
    <citation type="journal article" date="2008" name="Am. J. Hum. Genet.">
        <title>Oligosaccharyltransferase-subunit mutations in nonsyndromic mental retardation.</title>
        <authorList>
            <person name="Molinari F."/>
            <person name="Foulquier F."/>
            <person name="Tarpey P.S."/>
            <person name="Morelle W."/>
            <person name="Boissel S."/>
            <person name="Teague J."/>
            <person name="Edkins S."/>
            <person name="Futreal P.A."/>
            <person name="Stratton M.R."/>
            <person name="Turner G."/>
            <person name="Matthijs G."/>
            <person name="Gecz J."/>
            <person name="Munnich A."/>
            <person name="Colleaux L."/>
        </authorList>
    </citation>
    <scope>VARIANT GLY-311</scope>
    <scope>POSSIBLE ASSOCIATION WITH X-LINKED INTELLECTUAL DISABILITY</scope>
</reference>
<reference key="18">
    <citation type="journal article" date="2011" name="Nature">
        <title>Second messenger role for Mg2+ revealed by human T-cell immunodeficiency.</title>
        <authorList>
            <person name="Li F.Y."/>
            <person name="Chaigne-Delalande B."/>
            <person name="Kanellopoulou C."/>
            <person name="Davis J.C."/>
            <person name="Matthews H.F."/>
            <person name="Douek D.C."/>
            <person name="Cohen J.I."/>
            <person name="Uzel G."/>
            <person name="Su H.C."/>
            <person name="Lenardo M.J."/>
        </authorList>
    </citation>
    <scope>INVOLVEMENT IN XMEN</scope>
    <scope>VARIANT XMEN 137-PRO--SER-335 DEL</scope>
    <scope>CHARACTERIZATION OF VARIANT XMEN 137-PRO--SER-335 DEL</scope>
</reference>
<reference key="19">
    <citation type="journal article" date="2013" name="Am. J. Hum. Genet.">
        <title>XLID-causing mutations and associated genes challenged in light of data from large-scale human exome sequencing.</title>
        <authorList>
            <person name="Piton A."/>
            <person name="Redin C."/>
            <person name="Mandel J.L."/>
        </authorList>
    </citation>
    <scope>LACK OF ASSOCIATION OF VARIANT GLY-311 WITH X-LINKED INTELLECTUAL DISABILITY</scope>
</reference>
<reference key="20">
    <citation type="journal article" date="2014" name="Blood">
        <title>XMEN disease: a new primary immunodeficiency affecting Mg2+ regulation of immunity against Epstein-Barr virus.</title>
        <authorList>
            <person name="Li F.Y."/>
            <person name="Chaigne-Delalande B."/>
            <person name="Su H."/>
            <person name="Uzel G."/>
            <person name="Matthews H."/>
            <person name="Lenardo M.J."/>
        </authorList>
    </citation>
    <scope>INVOLVEMENT IN XMEN</scope>
    <scope>VARIANT 137-PRO--SER-335 DEL</scope>
    <scope>CHARACTERIZATION OF VARIANT 137-PRO--SER-335 DEL</scope>
</reference>
<reference key="21">
    <citation type="journal article" date="2015" name="J. Clin. Immunol.">
        <title>Identification of a novel mutation in MAGT1 and progressive multifocal leucoencephalopathy in a 58-year-old man with XMEN disease.</title>
        <authorList>
            <person name="Dhalla F."/>
            <person name="Murray S."/>
            <person name="Sadler R."/>
            <person name="Chaigne-Delalande B."/>
            <person name="Sadaoka T."/>
            <person name="Soilleux E."/>
            <person name="Uzel G."/>
            <person name="Miller J."/>
            <person name="Collins G.P."/>
            <person name="Hatton C.S."/>
            <person name="Bhole M."/>
            <person name="Ferry B."/>
            <person name="Chapel H.M."/>
            <person name="Cohen J.I."/>
            <person name="Patel S.Y."/>
        </authorList>
    </citation>
    <scope>VARIANT XMEN 238-HIS--SER-335 DEL</scope>
    <scope>CHARACTERIZATION OF VARIANT XMEN 238-HIS--SER-335 DEL</scope>
</reference>
<reference key="22">
    <citation type="journal article" date="2019" name="Proc. Natl. Acad. Sci. U.S.A.">
        <title>Mutations in MAGT1 lead to a glycosylation disorder with a variable phenotype.</title>
        <authorList>
            <person name="Blommaert E."/>
            <person name="Peanne R."/>
            <person name="Cherepanova N.A."/>
            <person name="Rymen D."/>
            <person name="Staels F."/>
            <person name="Jaeken J."/>
            <person name="Race V."/>
            <person name="Keldermans L."/>
            <person name="Souche E."/>
            <person name="Corveleyn A."/>
            <person name="Sparkes R."/>
            <person name="Bhattacharya K."/>
            <person name="Devalck C."/>
            <person name="Schrijvers R."/>
            <person name="Foulquier F."/>
            <person name="Gilmore R."/>
            <person name="Matthijs G."/>
        </authorList>
    </citation>
    <scope>INVOLVEMENT IN CDG1CC</scope>
    <scope>VARIANT XMEN 313-PHE--SER-335 DEL</scope>
    <scope>VARIANTS CDG1CC ASN-324 AND 331-SER--SER-335 DEL</scope>
    <scope>CHARACTERIZATION OF VARIANT XMEN 313-PHE--SER-335 DEL</scope>
    <scope>CHARACTERIZATION OF VARIANTS CDG1CC ASN-324 AND 331-SER--SER-335 DEL</scope>
    <scope>FUNCTION</scope>
    <scope>TISSUE SPECIFICITY</scope>
</reference>
<feature type="signal peptide" evidence="2">
    <location>
        <begin position="1"/>
        <end position="29"/>
    </location>
</feature>
<feature type="chain" id="PRO_0000246057" description="Dolichyl-diphosphooligosaccharide--protein glycosyltransferase subunit MAGT1">
    <location>
        <begin position="30"/>
        <end position="335"/>
    </location>
</feature>
<feature type="topological domain" description="Extracellular" evidence="2">
    <location>
        <begin position="30"/>
        <end position="184"/>
    </location>
</feature>
<feature type="transmembrane region" description="Helical" evidence="2">
    <location>
        <begin position="185"/>
        <end position="205"/>
    </location>
</feature>
<feature type="topological domain" description="Cytoplasmic" evidence="2">
    <location>
        <begin position="206"/>
        <end position="209"/>
    </location>
</feature>
<feature type="transmembrane region" description="Helical" evidence="2">
    <location>
        <begin position="210"/>
        <end position="230"/>
    </location>
</feature>
<feature type="topological domain" description="Extracellular" evidence="2">
    <location>
        <begin position="231"/>
        <end position="270"/>
    </location>
</feature>
<feature type="transmembrane region" description="Helical" evidence="2">
    <location>
        <begin position="271"/>
        <end position="291"/>
    </location>
</feature>
<feature type="topological domain" description="Cytoplasmic" evidence="2">
    <location>
        <begin position="292"/>
        <end position="300"/>
    </location>
</feature>
<feature type="transmembrane region" description="Helical" evidence="2">
    <location>
        <begin position="301"/>
        <end position="321"/>
    </location>
</feature>
<feature type="topological domain" description="Extracellular" evidence="2">
    <location>
        <begin position="322"/>
        <end position="335"/>
    </location>
</feature>
<feature type="domain" description="Thioredoxin">
    <location>
        <begin position="47"/>
        <end position="175"/>
    </location>
</feature>
<feature type="glycosylation site" description="N-linked (GlcNAc...) asparagine" evidence="2">
    <location>
        <position position="71"/>
    </location>
</feature>
<feature type="disulfide bond" description="Redox-active" evidence="1">
    <location>
        <begin position="87"/>
        <end position="90"/>
    </location>
</feature>
<feature type="splice variant" id="VSP_056556" description="In isoform 2." evidence="14">
    <original>LNMN</original>
    <variation>FQVF</variation>
    <location>
        <begin position="131"/>
        <end position="134"/>
    </location>
</feature>
<feature type="splice variant" id="VSP_056557" description="In isoform 2." evidence="14">
    <location>
        <begin position="135"/>
        <end position="335"/>
    </location>
</feature>
<feature type="sequence variant" id="VAR_083418" description="In XMEN; no protein expression." evidence="7 8">
    <location>
        <begin position="137"/>
        <end position="335"/>
    </location>
</feature>
<feature type="sequence variant" id="VAR_083419" description="In XMEN; decreased protein expression." evidence="10">
    <location>
        <begin position="238"/>
        <end position="335"/>
    </location>
</feature>
<feature type="sequence variant" id="VAR_045837" description="Found in patients with X-linked intellectual disability; uncertain significance; dbSNP:rs145245774." evidence="5">
    <original>V</original>
    <variation>G</variation>
    <location>
        <position position="311"/>
    </location>
</feature>
<feature type="sequence variant" id="VAR_083420" description="In XMEN; no protein expression; decreased protein N-linked glycosylation of STT3B-specific substrates." evidence="12">
    <location>
        <begin position="313"/>
        <end position="335"/>
    </location>
</feature>
<feature type="sequence variant" id="VAR_083421" description="In CDG1CC; no effect on protein expression; decreased protein N-linked glycosylation of STT3B-specific substrates; dbSNP:rs373260156." evidence="12">
    <original>K</original>
    <variation>N</variation>
    <location>
        <position position="324"/>
    </location>
</feature>
<feature type="sequence variant" id="VAR_083422" description="In CDG1CC; no protein expression; decreased protein N-linked glycosylation of STT3B-specific substrates." evidence="12">
    <location>
        <begin position="331"/>
        <end position="335"/>
    </location>
</feature>
<feature type="mutagenesis site" description="Reduces N-glycosylation of cysteine-proximal acceptor sites; when associated with S-90." evidence="9">
    <original>C</original>
    <variation>S</variation>
    <location>
        <position position="87"/>
    </location>
</feature>
<feature type="mutagenesis site" description="Reduces N-glycosylation of cysteine-proximal acceptor sites; when associated with S-87." evidence="9">
    <original>C</original>
    <variation>S</variation>
    <location>
        <position position="90"/>
    </location>
</feature>
<feature type="sequence conflict" description="In Ref. 4; BAC11592." evidence="15" ref="4">
    <original>Q</original>
    <variation>K</variation>
    <location>
        <position position="30"/>
    </location>
</feature>
<feature type="sequence conflict" description="In Ref. 6; BAD96851." evidence="15" ref="6">
    <original>A</original>
    <variation>V</variation>
    <location>
        <position position="290"/>
    </location>
</feature>
<feature type="helix" evidence="22">
    <location>
        <begin position="216"/>
        <end position="230"/>
    </location>
</feature>
<feature type="helix" evidence="22">
    <location>
        <begin position="236"/>
        <end position="239"/>
    </location>
</feature>
<feature type="strand" evidence="22">
    <location>
        <begin position="259"/>
        <end position="262"/>
    </location>
</feature>
<feature type="helix" evidence="22">
    <location>
        <begin position="266"/>
        <end position="288"/>
    </location>
</feature>
<feature type="helix" evidence="22">
    <location>
        <begin position="296"/>
        <end position="324"/>
    </location>
</feature>